<sequence>MGQKVNPFGFRLGITTDHRSRWFADSTKTGQRYADYVKEDVAIRRLMSKGMERAGISKVEIERTRDRVRVDIHTARPGIVIGRRGAEADRIRTELEKLTGKQVQLNILEVKNPEVDAQLVAQGVAEQLASRVSFRRAMRKGMQTTMRSGAKGIRVQCAGRLGGAEMSRSEFYREGRVPLHTLRANIDYGFYEARTTFGRIGVKVWIYHGDITSRELAQSQAAAPRAPRRNERGDRPDRGARRTRPAQDTTAPVAEAVATGSAPTGTAATEPVIGKGSNGTEA</sequence>
<gene>
    <name evidence="1" type="primary">rpsC</name>
    <name type="ordered locus">Krad_0694</name>
</gene>
<protein>
    <recommendedName>
        <fullName evidence="1">Small ribosomal subunit protein uS3</fullName>
    </recommendedName>
    <alternativeName>
        <fullName evidence="3">30S ribosomal protein S3</fullName>
    </alternativeName>
</protein>
<proteinExistence type="inferred from homology"/>
<keyword id="KW-1185">Reference proteome</keyword>
<keyword id="KW-0687">Ribonucleoprotein</keyword>
<keyword id="KW-0689">Ribosomal protein</keyword>
<keyword id="KW-0694">RNA-binding</keyword>
<keyword id="KW-0699">rRNA-binding</keyword>
<name>RS3_KINRD</name>
<comment type="function">
    <text evidence="1">Binds the lower part of the 30S subunit head. Binds mRNA in the 70S ribosome, positioning it for translation.</text>
</comment>
<comment type="subunit">
    <text evidence="1">Part of the 30S ribosomal subunit. Forms a tight complex with proteins S10 and S14.</text>
</comment>
<comment type="similarity">
    <text evidence="1">Belongs to the universal ribosomal protein uS3 family.</text>
</comment>
<organism>
    <name type="scientific">Kineococcus radiotolerans (strain ATCC BAA-149 / DSM 14245 / SRS30216)</name>
    <dbReference type="NCBI Taxonomy" id="266940"/>
    <lineage>
        <taxon>Bacteria</taxon>
        <taxon>Bacillati</taxon>
        <taxon>Actinomycetota</taxon>
        <taxon>Actinomycetes</taxon>
        <taxon>Kineosporiales</taxon>
        <taxon>Kineosporiaceae</taxon>
        <taxon>Kineococcus</taxon>
    </lineage>
</organism>
<dbReference type="EMBL" id="CP000750">
    <property type="protein sequence ID" value="ABS02183.1"/>
    <property type="molecule type" value="Genomic_DNA"/>
</dbReference>
<dbReference type="RefSeq" id="WP_012084975.1">
    <property type="nucleotide sequence ID" value="NC_009664.2"/>
</dbReference>
<dbReference type="SMR" id="A6W5U4"/>
<dbReference type="STRING" id="266940.Krad_0694"/>
<dbReference type="KEGG" id="kra:Krad_0694"/>
<dbReference type="eggNOG" id="COG0092">
    <property type="taxonomic scope" value="Bacteria"/>
</dbReference>
<dbReference type="HOGENOM" id="CLU_058591_0_2_11"/>
<dbReference type="OrthoDB" id="9806396at2"/>
<dbReference type="Proteomes" id="UP000001116">
    <property type="component" value="Chromosome"/>
</dbReference>
<dbReference type="GO" id="GO:0022627">
    <property type="term" value="C:cytosolic small ribosomal subunit"/>
    <property type="evidence" value="ECO:0007669"/>
    <property type="project" value="TreeGrafter"/>
</dbReference>
<dbReference type="GO" id="GO:0003729">
    <property type="term" value="F:mRNA binding"/>
    <property type="evidence" value="ECO:0007669"/>
    <property type="project" value="UniProtKB-UniRule"/>
</dbReference>
<dbReference type="GO" id="GO:0019843">
    <property type="term" value="F:rRNA binding"/>
    <property type="evidence" value="ECO:0007669"/>
    <property type="project" value="UniProtKB-UniRule"/>
</dbReference>
<dbReference type="GO" id="GO:0003735">
    <property type="term" value="F:structural constituent of ribosome"/>
    <property type="evidence" value="ECO:0007669"/>
    <property type="project" value="InterPro"/>
</dbReference>
<dbReference type="GO" id="GO:0006412">
    <property type="term" value="P:translation"/>
    <property type="evidence" value="ECO:0007669"/>
    <property type="project" value="UniProtKB-UniRule"/>
</dbReference>
<dbReference type="CDD" id="cd02412">
    <property type="entry name" value="KH-II_30S_S3"/>
    <property type="match status" value="1"/>
</dbReference>
<dbReference type="FunFam" id="3.30.1140.32:FF:000002">
    <property type="entry name" value="30S ribosomal protein S3"/>
    <property type="match status" value="1"/>
</dbReference>
<dbReference type="FunFam" id="3.30.300.20:FF:000001">
    <property type="entry name" value="30S ribosomal protein S3"/>
    <property type="match status" value="1"/>
</dbReference>
<dbReference type="Gene3D" id="3.30.300.20">
    <property type="match status" value="1"/>
</dbReference>
<dbReference type="Gene3D" id="3.30.1140.32">
    <property type="entry name" value="Ribosomal protein S3, C-terminal domain"/>
    <property type="match status" value="1"/>
</dbReference>
<dbReference type="HAMAP" id="MF_01309_B">
    <property type="entry name" value="Ribosomal_uS3_B"/>
    <property type="match status" value="1"/>
</dbReference>
<dbReference type="InterPro" id="IPR004087">
    <property type="entry name" value="KH_dom"/>
</dbReference>
<dbReference type="InterPro" id="IPR015946">
    <property type="entry name" value="KH_dom-like_a/b"/>
</dbReference>
<dbReference type="InterPro" id="IPR004044">
    <property type="entry name" value="KH_dom_type_2"/>
</dbReference>
<dbReference type="InterPro" id="IPR009019">
    <property type="entry name" value="KH_sf_prok-type"/>
</dbReference>
<dbReference type="InterPro" id="IPR036419">
    <property type="entry name" value="Ribosomal_S3_C_sf"/>
</dbReference>
<dbReference type="InterPro" id="IPR005704">
    <property type="entry name" value="Ribosomal_uS3_bac-typ"/>
</dbReference>
<dbReference type="InterPro" id="IPR001351">
    <property type="entry name" value="Ribosomal_uS3_C"/>
</dbReference>
<dbReference type="InterPro" id="IPR018280">
    <property type="entry name" value="Ribosomal_uS3_CS"/>
</dbReference>
<dbReference type="NCBIfam" id="TIGR01009">
    <property type="entry name" value="rpsC_bact"/>
    <property type="match status" value="1"/>
</dbReference>
<dbReference type="PANTHER" id="PTHR11760">
    <property type="entry name" value="30S/40S RIBOSOMAL PROTEIN S3"/>
    <property type="match status" value="1"/>
</dbReference>
<dbReference type="PANTHER" id="PTHR11760:SF19">
    <property type="entry name" value="SMALL RIBOSOMAL SUBUNIT PROTEIN US3C"/>
    <property type="match status" value="1"/>
</dbReference>
<dbReference type="Pfam" id="PF07650">
    <property type="entry name" value="KH_2"/>
    <property type="match status" value="1"/>
</dbReference>
<dbReference type="Pfam" id="PF00189">
    <property type="entry name" value="Ribosomal_S3_C"/>
    <property type="match status" value="1"/>
</dbReference>
<dbReference type="SMART" id="SM00322">
    <property type="entry name" value="KH"/>
    <property type="match status" value="1"/>
</dbReference>
<dbReference type="SUPFAM" id="SSF54814">
    <property type="entry name" value="Prokaryotic type KH domain (KH-domain type II)"/>
    <property type="match status" value="1"/>
</dbReference>
<dbReference type="SUPFAM" id="SSF54821">
    <property type="entry name" value="Ribosomal protein S3 C-terminal domain"/>
    <property type="match status" value="1"/>
</dbReference>
<dbReference type="PROSITE" id="PS50823">
    <property type="entry name" value="KH_TYPE_2"/>
    <property type="match status" value="1"/>
</dbReference>
<dbReference type="PROSITE" id="PS00548">
    <property type="entry name" value="RIBOSOMAL_S3"/>
    <property type="match status" value="1"/>
</dbReference>
<evidence type="ECO:0000255" key="1">
    <source>
        <dbReference type="HAMAP-Rule" id="MF_01309"/>
    </source>
</evidence>
<evidence type="ECO:0000256" key="2">
    <source>
        <dbReference type="SAM" id="MobiDB-lite"/>
    </source>
</evidence>
<evidence type="ECO:0000305" key="3"/>
<feature type="chain" id="PRO_1000086129" description="Small ribosomal subunit protein uS3">
    <location>
        <begin position="1"/>
        <end position="282"/>
    </location>
</feature>
<feature type="domain" description="KH type-2" evidence="1">
    <location>
        <begin position="43"/>
        <end position="111"/>
    </location>
</feature>
<feature type="region of interest" description="Disordered" evidence="2">
    <location>
        <begin position="217"/>
        <end position="282"/>
    </location>
</feature>
<feature type="compositionally biased region" description="Basic and acidic residues" evidence="2">
    <location>
        <begin position="228"/>
        <end position="240"/>
    </location>
</feature>
<feature type="compositionally biased region" description="Low complexity" evidence="2">
    <location>
        <begin position="256"/>
        <end position="269"/>
    </location>
</feature>
<accession>A6W5U4</accession>
<reference key="1">
    <citation type="journal article" date="2008" name="PLoS ONE">
        <title>Survival in nuclear waste, extreme resistance, and potential applications gleaned from the genome sequence of Kineococcus radiotolerans SRS30216.</title>
        <authorList>
            <person name="Bagwell C.E."/>
            <person name="Bhat S."/>
            <person name="Hawkins G.M."/>
            <person name="Smith B.W."/>
            <person name="Biswas T."/>
            <person name="Hoover T.R."/>
            <person name="Saunders E."/>
            <person name="Han C.S."/>
            <person name="Tsodikov O.V."/>
            <person name="Shimkets L.J."/>
        </authorList>
    </citation>
    <scope>NUCLEOTIDE SEQUENCE [LARGE SCALE GENOMIC DNA]</scope>
    <source>
        <strain>ATCC BAA-149 / DSM 14245 / SRS30216</strain>
    </source>
</reference>